<evidence type="ECO:0000250" key="1"/>
<evidence type="ECO:0000255" key="2">
    <source>
        <dbReference type="PROSITE-ProRule" id="PRU00114"/>
    </source>
</evidence>
<evidence type="ECO:0000305" key="3"/>
<gene>
    <name type="primary">B2M</name>
</gene>
<sequence length="119" mass="13712">MARFVVVALLVLLSLSGLEAIQRAPKIQVYSRHPAENGKPNFLNCYVSGFHPSDIEVDLLKNGKKIEKVEHSDLSFSKDWSFYLLYYTEFTPNEKDEYACRVSHVTLSTPKTVKWDRNM</sequence>
<dbReference type="EMBL" id="AF032093">
    <property type="protein sequence ID" value="AAC52107.1"/>
    <property type="molecule type" value="Genomic_DNA"/>
</dbReference>
<dbReference type="EMBL" id="AF032092">
    <property type="protein sequence ID" value="AAC52107.1"/>
    <property type="status" value="JOINED"/>
    <property type="molecule type" value="Genomic_DNA"/>
</dbReference>
<dbReference type="EMBL" id="AF042146">
    <property type="protein sequence ID" value="AAB97465.1"/>
    <property type="molecule type" value="mRNA"/>
</dbReference>
<dbReference type="SMR" id="O77537"/>
<dbReference type="GO" id="GO:0005576">
    <property type="term" value="C:extracellular region"/>
    <property type="evidence" value="ECO:0007669"/>
    <property type="project" value="UniProtKB-SubCell"/>
</dbReference>
<dbReference type="GO" id="GO:0042612">
    <property type="term" value="C:MHC class I protein complex"/>
    <property type="evidence" value="ECO:0007669"/>
    <property type="project" value="UniProtKB-KW"/>
</dbReference>
<dbReference type="GO" id="GO:0002474">
    <property type="term" value="P:antigen processing and presentation of peptide antigen via MHC class I"/>
    <property type="evidence" value="ECO:0007669"/>
    <property type="project" value="UniProtKB-KW"/>
</dbReference>
<dbReference type="GO" id="GO:0006955">
    <property type="term" value="P:immune response"/>
    <property type="evidence" value="ECO:0007669"/>
    <property type="project" value="InterPro"/>
</dbReference>
<dbReference type="CDD" id="cd05770">
    <property type="entry name" value="IgC1_beta2m"/>
    <property type="match status" value="1"/>
</dbReference>
<dbReference type="FunFam" id="2.60.40.10:FF:001005">
    <property type="entry name" value="Beta-2-microglobulin"/>
    <property type="match status" value="1"/>
</dbReference>
<dbReference type="Gene3D" id="2.60.40.10">
    <property type="entry name" value="Immunoglobulins"/>
    <property type="match status" value="1"/>
</dbReference>
<dbReference type="InterPro" id="IPR015707">
    <property type="entry name" value="B2Microglobulin"/>
</dbReference>
<dbReference type="InterPro" id="IPR007110">
    <property type="entry name" value="Ig-like_dom"/>
</dbReference>
<dbReference type="InterPro" id="IPR036179">
    <property type="entry name" value="Ig-like_dom_sf"/>
</dbReference>
<dbReference type="InterPro" id="IPR013783">
    <property type="entry name" value="Ig-like_fold"/>
</dbReference>
<dbReference type="InterPro" id="IPR003006">
    <property type="entry name" value="Ig/MHC_CS"/>
</dbReference>
<dbReference type="InterPro" id="IPR003597">
    <property type="entry name" value="Ig_C1-set"/>
</dbReference>
<dbReference type="InterPro" id="IPR050160">
    <property type="entry name" value="MHC/Immunoglobulin"/>
</dbReference>
<dbReference type="PANTHER" id="PTHR19944:SF62">
    <property type="entry name" value="BETA-2-MICROGLOBULIN"/>
    <property type="match status" value="1"/>
</dbReference>
<dbReference type="PANTHER" id="PTHR19944">
    <property type="entry name" value="MHC CLASS II-RELATED"/>
    <property type="match status" value="1"/>
</dbReference>
<dbReference type="Pfam" id="PF07654">
    <property type="entry name" value="C1-set"/>
    <property type="match status" value="1"/>
</dbReference>
<dbReference type="SMART" id="SM00407">
    <property type="entry name" value="IGc1"/>
    <property type="match status" value="1"/>
</dbReference>
<dbReference type="SUPFAM" id="SSF48726">
    <property type="entry name" value="Immunoglobulin"/>
    <property type="match status" value="1"/>
</dbReference>
<dbReference type="PROSITE" id="PS50835">
    <property type="entry name" value="IG_LIKE"/>
    <property type="match status" value="1"/>
</dbReference>
<dbReference type="PROSITE" id="PS00290">
    <property type="entry name" value="IG_MHC"/>
    <property type="match status" value="1"/>
</dbReference>
<organism>
    <name type="scientific">Aotus azarae</name>
    <name type="common">Azara's night monkey</name>
    <name type="synonym">Simia azarae</name>
    <dbReference type="NCBI Taxonomy" id="30591"/>
    <lineage>
        <taxon>Eukaryota</taxon>
        <taxon>Metazoa</taxon>
        <taxon>Chordata</taxon>
        <taxon>Craniata</taxon>
        <taxon>Vertebrata</taxon>
        <taxon>Euteleostomi</taxon>
        <taxon>Mammalia</taxon>
        <taxon>Eutheria</taxon>
        <taxon>Euarchontoglires</taxon>
        <taxon>Primates</taxon>
        <taxon>Haplorrhini</taxon>
        <taxon>Platyrrhini</taxon>
        <taxon>Aotidae</taxon>
        <taxon>Aotus</taxon>
    </lineage>
</organism>
<protein>
    <recommendedName>
        <fullName>Beta-2-microglobulin</fullName>
    </recommendedName>
</protein>
<feature type="signal peptide" evidence="1">
    <location>
        <begin position="1"/>
        <end position="20"/>
    </location>
</feature>
<feature type="chain" id="PRO_0000018752" description="Beta-2-microglobulin">
    <location>
        <begin position="21"/>
        <end position="119"/>
    </location>
</feature>
<feature type="domain" description="Ig-like C1-type">
    <location>
        <begin position="25"/>
        <end position="114"/>
    </location>
</feature>
<feature type="disulfide bond" evidence="2">
    <location>
        <begin position="45"/>
        <end position="100"/>
    </location>
</feature>
<feature type="sequence variant" description="In strain: Isolate AoAz2.">
    <original>A</original>
    <variation>T</variation>
    <location>
        <position position="24"/>
    </location>
</feature>
<comment type="function">
    <text evidence="1">Component of the class I major histocompatibility complex (MHC). Involved in the presentation of peptide antigens to the immune system (By similarity).</text>
</comment>
<comment type="subunit">
    <text evidence="1">Heterodimer of an alpha chain and a beta chain. Beta-2-microglobulin is the beta-chain of major histocompatibility complex class I molecules (By similarity).</text>
</comment>
<comment type="subcellular location">
    <subcellularLocation>
        <location evidence="1">Secreted</location>
    </subcellularLocation>
</comment>
<comment type="similarity">
    <text evidence="3">Belongs to the beta-2-microglobulin family.</text>
</comment>
<proteinExistence type="inferred from homology"/>
<keyword id="KW-1015">Disulfide bond</keyword>
<keyword id="KW-0391">Immunity</keyword>
<keyword id="KW-0393">Immunoglobulin domain</keyword>
<keyword id="KW-0490">MHC I</keyword>
<keyword id="KW-0964">Secreted</keyword>
<keyword id="KW-0732">Signal</keyword>
<accession>O77537</accession>
<accession>O46571</accession>
<reference key="1">
    <citation type="journal article" date="1998" name="Immunogenetics">
        <title>Beta-2-microglobulin in neotropical primates (Platyrrhini).</title>
        <authorList>
            <person name="Canavez F.C."/>
            <person name="Ladasky J.J."/>
            <person name="Muniz J.A.P.C."/>
            <person name="Seuanez H.N."/>
            <person name="Parham P."/>
        </authorList>
    </citation>
    <scope>NUCLEOTIDE SEQUENCE [GENOMIC DNA]</scope>
    <source>
        <strain>Isolate AoAz1</strain>
        <strain>Isolate AoAz2</strain>
        <tissue>Blood</tissue>
    </source>
</reference>
<reference key="2">
    <citation type="submission" date="1998-01" db="EMBL/GenBank/DDBJ databases">
        <title>Polymorphism at the third residue of owl monkey beta-2 microglobulin affects binding by the W6/32 antibody.</title>
        <authorList>
            <person name="Ladasky J.J."/>
            <person name="Shum B.P."/>
            <person name="Parham P."/>
        </authorList>
    </citation>
    <scope>NUCLEOTIDE SEQUENCE [MRNA]</scope>
</reference>
<name>B2MG_AOTAZ</name>